<keyword id="KW-0963">Cytoplasm</keyword>
<keyword id="KW-0385">Hypusine</keyword>
<keyword id="KW-0396">Initiation factor</keyword>
<keyword id="KW-0648">Protein biosynthesis</keyword>
<accession>C3MYM9</accession>
<comment type="function">
    <text evidence="1">Functions by promoting the formation of the first peptide bond.</text>
</comment>
<comment type="subcellular location">
    <subcellularLocation>
        <location evidence="1">Cytoplasm</location>
    </subcellularLocation>
</comment>
<comment type="similarity">
    <text evidence="1">Belongs to the eIF-5A family.</text>
</comment>
<reference key="1">
    <citation type="journal article" date="2009" name="Proc. Natl. Acad. Sci. U.S.A.">
        <title>Biogeography of the Sulfolobus islandicus pan-genome.</title>
        <authorList>
            <person name="Reno M.L."/>
            <person name="Held N.L."/>
            <person name="Fields C.J."/>
            <person name="Burke P.V."/>
            <person name="Whitaker R.J."/>
        </authorList>
    </citation>
    <scope>NUCLEOTIDE SEQUENCE [LARGE SCALE GENOMIC DNA]</scope>
    <source>
        <strain>M.14.25 / Kamchatka #1</strain>
    </source>
</reference>
<evidence type="ECO:0000255" key="1">
    <source>
        <dbReference type="HAMAP-Rule" id="MF_00085"/>
    </source>
</evidence>
<name>IF5A_SACI4</name>
<feature type="chain" id="PRO_1000202606" description="Translation initiation factor 5A">
    <location>
        <begin position="1"/>
        <end position="131"/>
    </location>
</feature>
<feature type="modified residue" description="Hypusine" evidence="1">
    <location>
        <position position="36"/>
    </location>
</feature>
<sequence>MSITYTTVGELKVGSYVVIDGEPCRVVEVTKAKTGKHGSAKANVVAIGVFSGAKKTLMAPVDQQVEVPIIEKHIGQIIADMGDKIQVMDLETYETFEIEKPTEDELASKIRPNAELEYWEIMGRRKIVRVK</sequence>
<proteinExistence type="inferred from homology"/>
<gene>
    <name type="primary">eIF5A</name>
    <name type="ordered locus">M1425_1253</name>
</gene>
<protein>
    <recommendedName>
        <fullName evidence="1">Translation initiation factor 5A</fullName>
    </recommendedName>
    <alternativeName>
        <fullName evidence="1">Hypusine-containing protein</fullName>
    </alternativeName>
    <alternativeName>
        <fullName evidence="1">eIF-5A</fullName>
    </alternativeName>
</protein>
<organism>
    <name type="scientific">Saccharolobus islandicus (strain M.14.25 / Kamchatka #1)</name>
    <name type="common">Sulfolobus islandicus</name>
    <dbReference type="NCBI Taxonomy" id="427317"/>
    <lineage>
        <taxon>Archaea</taxon>
        <taxon>Thermoproteota</taxon>
        <taxon>Thermoprotei</taxon>
        <taxon>Sulfolobales</taxon>
        <taxon>Sulfolobaceae</taxon>
        <taxon>Saccharolobus</taxon>
    </lineage>
</organism>
<dbReference type="EMBL" id="CP001400">
    <property type="protein sequence ID" value="ACP38008.1"/>
    <property type="molecule type" value="Genomic_DNA"/>
</dbReference>
<dbReference type="RefSeq" id="WP_012711261.1">
    <property type="nucleotide sequence ID" value="NC_012588.1"/>
</dbReference>
<dbReference type="SMR" id="C3MYM9"/>
<dbReference type="KEGG" id="sia:M1425_1253"/>
<dbReference type="HOGENOM" id="CLU_102600_3_0_2"/>
<dbReference type="Proteomes" id="UP000001350">
    <property type="component" value="Chromosome"/>
</dbReference>
<dbReference type="GO" id="GO:0005737">
    <property type="term" value="C:cytoplasm"/>
    <property type="evidence" value="ECO:0007669"/>
    <property type="project" value="UniProtKB-SubCell"/>
</dbReference>
<dbReference type="GO" id="GO:0043022">
    <property type="term" value="F:ribosome binding"/>
    <property type="evidence" value="ECO:0007669"/>
    <property type="project" value="InterPro"/>
</dbReference>
<dbReference type="GO" id="GO:0003723">
    <property type="term" value="F:RNA binding"/>
    <property type="evidence" value="ECO:0007669"/>
    <property type="project" value="InterPro"/>
</dbReference>
<dbReference type="GO" id="GO:0003746">
    <property type="term" value="F:translation elongation factor activity"/>
    <property type="evidence" value="ECO:0007669"/>
    <property type="project" value="InterPro"/>
</dbReference>
<dbReference type="GO" id="GO:0003743">
    <property type="term" value="F:translation initiation factor activity"/>
    <property type="evidence" value="ECO:0007669"/>
    <property type="project" value="UniProtKB-UniRule"/>
</dbReference>
<dbReference type="GO" id="GO:0045901">
    <property type="term" value="P:positive regulation of translational elongation"/>
    <property type="evidence" value="ECO:0007669"/>
    <property type="project" value="InterPro"/>
</dbReference>
<dbReference type="GO" id="GO:0045905">
    <property type="term" value="P:positive regulation of translational termination"/>
    <property type="evidence" value="ECO:0007669"/>
    <property type="project" value="InterPro"/>
</dbReference>
<dbReference type="CDD" id="cd04467">
    <property type="entry name" value="S1_aIF5A"/>
    <property type="match status" value="1"/>
</dbReference>
<dbReference type="FunFam" id="2.30.30.30:FF:000038">
    <property type="entry name" value="Translation initiation factor 5A"/>
    <property type="match status" value="1"/>
</dbReference>
<dbReference type="FunFam" id="2.40.50.140:FF:000334">
    <property type="entry name" value="Translation initiation factor 5A"/>
    <property type="match status" value="1"/>
</dbReference>
<dbReference type="Gene3D" id="2.30.30.30">
    <property type="match status" value="1"/>
</dbReference>
<dbReference type="Gene3D" id="2.40.50.140">
    <property type="entry name" value="Nucleic acid-binding proteins"/>
    <property type="match status" value="1"/>
</dbReference>
<dbReference type="HAMAP" id="MF_00085">
    <property type="entry name" value="eIF_5A"/>
    <property type="match status" value="1"/>
</dbReference>
<dbReference type="InterPro" id="IPR001884">
    <property type="entry name" value="IF5A-like"/>
</dbReference>
<dbReference type="InterPro" id="IPR048670">
    <property type="entry name" value="IF5A-like_N"/>
</dbReference>
<dbReference type="InterPro" id="IPR012340">
    <property type="entry name" value="NA-bd_OB-fold"/>
</dbReference>
<dbReference type="InterPro" id="IPR014722">
    <property type="entry name" value="Rib_uL2_dom2"/>
</dbReference>
<dbReference type="InterPro" id="IPR019769">
    <property type="entry name" value="Trans_elong_IF5A_hypusine_site"/>
</dbReference>
<dbReference type="InterPro" id="IPR022847">
    <property type="entry name" value="Transl_elong_IF5A_arc"/>
</dbReference>
<dbReference type="InterPro" id="IPR020189">
    <property type="entry name" value="Transl_elong_IF5A_C"/>
</dbReference>
<dbReference type="InterPro" id="IPR008991">
    <property type="entry name" value="Translation_prot_SH3-like_sf"/>
</dbReference>
<dbReference type="NCBIfam" id="TIGR00037">
    <property type="entry name" value="eIF_5A"/>
    <property type="match status" value="1"/>
</dbReference>
<dbReference type="NCBIfam" id="NF003076">
    <property type="entry name" value="PRK03999.1"/>
    <property type="match status" value="1"/>
</dbReference>
<dbReference type="PANTHER" id="PTHR11673">
    <property type="entry name" value="TRANSLATION INITIATION FACTOR 5A FAMILY MEMBER"/>
    <property type="match status" value="1"/>
</dbReference>
<dbReference type="Pfam" id="PF01287">
    <property type="entry name" value="eIF-5a"/>
    <property type="match status" value="1"/>
</dbReference>
<dbReference type="Pfam" id="PF21485">
    <property type="entry name" value="IF5A-like_N"/>
    <property type="match status" value="1"/>
</dbReference>
<dbReference type="PIRSF" id="PIRSF003025">
    <property type="entry name" value="eIF5A"/>
    <property type="match status" value="1"/>
</dbReference>
<dbReference type="SMART" id="SM01376">
    <property type="entry name" value="eIF-5a"/>
    <property type="match status" value="1"/>
</dbReference>
<dbReference type="SUPFAM" id="SSF50249">
    <property type="entry name" value="Nucleic acid-binding proteins"/>
    <property type="match status" value="1"/>
</dbReference>
<dbReference type="SUPFAM" id="SSF50104">
    <property type="entry name" value="Translation proteins SH3-like domain"/>
    <property type="match status" value="1"/>
</dbReference>
<dbReference type="PROSITE" id="PS00302">
    <property type="entry name" value="IF5A_HYPUSINE"/>
    <property type="match status" value="1"/>
</dbReference>